<accession>P62702</accession>
<accession>P12631</accession>
<accession>P12750</accession>
<accession>P27576</accession>
<accession>P55831</accession>
<accession>Q14727</accession>
<accession>Q9CXN0</accession>
<protein>
    <recommendedName>
        <fullName evidence="3">Small ribosomal subunit protein eS4</fullName>
    </recommendedName>
    <alternativeName>
        <fullName>40S ribosomal protein S4, X isoform</fullName>
    </alternativeName>
</protein>
<comment type="function">
    <text evidence="1 2">Component of the small ribosomal subunit (PubMed:36517592). The ribosome is a large ribonucleoprotein complex responsible for the synthesis of proteins in the cell (PubMed:36517592). Part of the small subunit (SSU) processome, first precursor of the small eukaryotic ribosomal subunit. During the assembly of the SSU processome in the nucleolus, many ribosome biogenesis factors, an RNA chaperone and ribosomal proteins associate with the nascent pre-rRNA and work in concert to generate RNA folding, modifications, rearrangements and cleavage as well as targeted degradation of pre-ribosomal RNA by the RNA exosome (By similarity).</text>
</comment>
<comment type="subunit">
    <text evidence="1">Component of the small ribosomal subunit (PubMed:36517592). Part of the small subunit (SSU) processome, composed of more than 70 proteins and the RNA chaperone small nucleolar RNA (snoRNA) U3. Identified in a IGF2BP1-dependent mRNP granule complex containing untranslated mRNAs (By similarity). Identified in a IGF2BP1-dependent mRNP granule complex containing untranslated mRNAs (By similarity).</text>
</comment>
<comment type="subcellular location">
    <subcellularLocation>
        <location evidence="2">Cytoplasm</location>
    </subcellularLocation>
    <subcellularLocation>
        <location evidence="1">Nucleus</location>
        <location evidence="1">Nucleolus</location>
    </subcellularLocation>
    <text evidence="1">Localized in cytoplasmic mRNP granules containing untranslated mRNAs.</text>
</comment>
<comment type="similarity">
    <text evidence="3">Belongs to the eukaryotic ribosomal protein eS4 family.</text>
</comment>
<sequence>MARGPKKHLKRVAAPKHWMLDKLTGVFAPRPSTGPHKLRECLPLIIFLRNRLKYALTGDEVKKICMQRFIKIDGKVRTDITYPAGFMDVISIDKTGENFRLIYDTKGRFAVHRITPEEAKYKLCKVRKIFVGTKGIPHLVTHDARTIRYPDPLIKVNDTIQIDLETGKITDFIKFDTGNLCMVTGGANLGRIGVITNRERHPGSFDVVHVKDANGNSFATRLSNIFVIGKGNKPWISLPRGKGIRLTIAEERDKRLAAKQSSG</sequence>
<organism>
    <name type="scientific">Mus musculus</name>
    <name type="common">Mouse</name>
    <dbReference type="NCBI Taxonomy" id="10090"/>
    <lineage>
        <taxon>Eukaryota</taxon>
        <taxon>Metazoa</taxon>
        <taxon>Chordata</taxon>
        <taxon>Craniata</taxon>
        <taxon>Vertebrata</taxon>
        <taxon>Euteleostomi</taxon>
        <taxon>Mammalia</taxon>
        <taxon>Eutheria</taxon>
        <taxon>Euarchontoglires</taxon>
        <taxon>Glires</taxon>
        <taxon>Rodentia</taxon>
        <taxon>Myomorpha</taxon>
        <taxon>Muroidea</taxon>
        <taxon>Muridae</taxon>
        <taxon>Murinae</taxon>
        <taxon>Mus</taxon>
        <taxon>Mus</taxon>
    </lineage>
</organism>
<gene>
    <name type="primary">Rps4x</name>
    <name type="synonym">Rps4</name>
</gene>
<dbReference type="EMBL" id="M73436">
    <property type="protein sequence ID" value="AAA40075.1"/>
    <property type="molecule type" value="mRNA"/>
</dbReference>
<dbReference type="EMBL" id="AK014210">
    <property type="protein sequence ID" value="BAB29207.1"/>
    <property type="molecule type" value="mRNA"/>
</dbReference>
<dbReference type="EMBL" id="BC009100">
    <property type="protein sequence ID" value="AAH09100.1"/>
    <property type="molecule type" value="mRNA"/>
</dbReference>
<dbReference type="EMBL" id="M77296">
    <property type="protein sequence ID" value="AAA40072.1"/>
    <property type="molecule type" value="Genomic_DNA"/>
</dbReference>
<dbReference type="CCDS" id="CCDS41083.1"/>
<dbReference type="RefSeq" id="NP_033120.1">
    <property type="nucleotide sequence ID" value="NM_009094.3"/>
</dbReference>
<dbReference type="PDB" id="7CPU">
    <property type="method" value="EM"/>
    <property type="resolution" value="2.82 A"/>
    <property type="chains" value="SE=1-263"/>
</dbReference>
<dbReference type="PDB" id="7CPV">
    <property type="method" value="EM"/>
    <property type="resolution" value="3.03 A"/>
    <property type="chains" value="SE=1-263"/>
</dbReference>
<dbReference type="PDB" id="7LS1">
    <property type="method" value="EM"/>
    <property type="resolution" value="3.30 A"/>
    <property type="chains" value="r2=1-263"/>
</dbReference>
<dbReference type="PDB" id="7LS2">
    <property type="method" value="EM"/>
    <property type="resolution" value="3.10 A"/>
    <property type="chains" value="r2=1-263"/>
</dbReference>
<dbReference type="PDBsum" id="7CPU"/>
<dbReference type="PDBsum" id="7CPV"/>
<dbReference type="PDBsum" id="7LS1"/>
<dbReference type="PDBsum" id="7LS2"/>
<dbReference type="EMDB" id="EMD-23500"/>
<dbReference type="EMDB" id="EMD-23501"/>
<dbReference type="EMDB" id="EMD-30432"/>
<dbReference type="EMDB" id="EMD-30433"/>
<dbReference type="SMR" id="P62702"/>
<dbReference type="BioGRID" id="203011">
    <property type="interactions" value="160"/>
</dbReference>
<dbReference type="ComplexPortal" id="CPX-5261">
    <property type="entry name" value="40S cytosolic small ribosomal subunit"/>
</dbReference>
<dbReference type="CORUM" id="P62702"/>
<dbReference type="FunCoup" id="P62702">
    <property type="interactions" value="1994"/>
</dbReference>
<dbReference type="IntAct" id="P62702">
    <property type="interactions" value="4"/>
</dbReference>
<dbReference type="MINT" id="P62702"/>
<dbReference type="STRING" id="10090.ENSMUSP00000033683"/>
<dbReference type="GlyGen" id="P62702">
    <property type="glycosylation" value="2 sites, 1 N-linked glycan (1 site), 1 O-linked glycan (1 site)"/>
</dbReference>
<dbReference type="iPTMnet" id="P62702"/>
<dbReference type="MetOSite" id="P62702"/>
<dbReference type="PhosphoSitePlus" id="P62702"/>
<dbReference type="SwissPalm" id="P62702"/>
<dbReference type="jPOST" id="P62702"/>
<dbReference type="PaxDb" id="10090-ENSMUSP00000033683"/>
<dbReference type="PeptideAtlas" id="P62702"/>
<dbReference type="ProteomicsDB" id="260847"/>
<dbReference type="Pumba" id="P62702"/>
<dbReference type="Antibodypedia" id="27877">
    <property type="antibodies" value="186 antibodies from 31 providers"/>
</dbReference>
<dbReference type="DNASU" id="20102"/>
<dbReference type="Ensembl" id="ENSMUST00000033683.8">
    <property type="protein sequence ID" value="ENSMUSP00000033683.8"/>
    <property type="gene ID" value="ENSMUSG00000031320.10"/>
</dbReference>
<dbReference type="GeneID" id="20102"/>
<dbReference type="KEGG" id="mmu:20102"/>
<dbReference type="UCSC" id="uc009tyl.2">
    <property type="organism name" value="mouse"/>
</dbReference>
<dbReference type="AGR" id="MGI:98158"/>
<dbReference type="CTD" id="6191"/>
<dbReference type="MGI" id="MGI:98158">
    <property type="gene designation" value="Rps4x"/>
</dbReference>
<dbReference type="VEuPathDB" id="HostDB:ENSMUSG00000031320"/>
<dbReference type="eggNOG" id="KOG0378">
    <property type="taxonomic scope" value="Eukaryota"/>
</dbReference>
<dbReference type="GeneTree" id="ENSGT00390000005569"/>
<dbReference type="HOGENOM" id="CLU_060400_1_0_1"/>
<dbReference type="InParanoid" id="P62702"/>
<dbReference type="OMA" id="GHIQLNL"/>
<dbReference type="OrthoDB" id="1109245at2759"/>
<dbReference type="PhylomeDB" id="P62702"/>
<dbReference type="TreeFam" id="TF300612"/>
<dbReference type="Reactome" id="R-MMU-156827">
    <property type="pathway name" value="L13a-mediated translational silencing of Ceruloplasmin expression"/>
</dbReference>
<dbReference type="Reactome" id="R-MMU-1799339">
    <property type="pathway name" value="SRP-dependent cotranslational protein targeting to membrane"/>
</dbReference>
<dbReference type="Reactome" id="R-MMU-6791226">
    <property type="pathway name" value="Major pathway of rRNA processing in the nucleolus and cytosol"/>
</dbReference>
<dbReference type="Reactome" id="R-MMU-72649">
    <property type="pathway name" value="Translation initiation complex formation"/>
</dbReference>
<dbReference type="Reactome" id="R-MMU-72689">
    <property type="pathway name" value="Formation of a pool of free 40S subunits"/>
</dbReference>
<dbReference type="Reactome" id="R-MMU-72695">
    <property type="pathway name" value="Formation of the ternary complex, and subsequently, the 43S complex"/>
</dbReference>
<dbReference type="Reactome" id="R-MMU-72702">
    <property type="pathway name" value="Ribosomal scanning and start codon recognition"/>
</dbReference>
<dbReference type="Reactome" id="R-MMU-72706">
    <property type="pathway name" value="GTP hydrolysis and joining of the 60S ribosomal subunit"/>
</dbReference>
<dbReference type="Reactome" id="R-MMU-975956">
    <property type="pathway name" value="Nonsense Mediated Decay (NMD) independent of the Exon Junction Complex (EJC)"/>
</dbReference>
<dbReference type="Reactome" id="R-MMU-975957">
    <property type="pathway name" value="Nonsense Mediated Decay (NMD) enhanced by the Exon Junction Complex (EJC)"/>
</dbReference>
<dbReference type="BioGRID-ORCS" id="20102">
    <property type="hits" value="25 hits in 57 CRISPR screens"/>
</dbReference>
<dbReference type="CD-CODE" id="CE726F99">
    <property type="entry name" value="Postsynaptic density"/>
</dbReference>
<dbReference type="ChiTaRS" id="Rps4x">
    <property type="organism name" value="mouse"/>
</dbReference>
<dbReference type="PRO" id="PR:P62702"/>
<dbReference type="Proteomes" id="UP000000589">
    <property type="component" value="Chromosome X"/>
</dbReference>
<dbReference type="RNAct" id="P62702">
    <property type="molecule type" value="protein"/>
</dbReference>
<dbReference type="Bgee" id="ENSMUSG00000031320">
    <property type="expression patterns" value="Expressed in epiblast (generic) and 64 other cell types or tissues"/>
</dbReference>
<dbReference type="ExpressionAtlas" id="P62702">
    <property type="expression patterns" value="baseline and differential"/>
</dbReference>
<dbReference type="GO" id="GO:0005737">
    <property type="term" value="C:cytoplasm"/>
    <property type="evidence" value="ECO:0000303"/>
    <property type="project" value="ComplexPortal"/>
</dbReference>
<dbReference type="GO" id="GO:0005829">
    <property type="term" value="C:cytosol"/>
    <property type="evidence" value="ECO:0000304"/>
    <property type="project" value="Reactome"/>
</dbReference>
<dbReference type="GO" id="GO:0022627">
    <property type="term" value="C:cytosolic small ribosomal subunit"/>
    <property type="evidence" value="ECO:0000314"/>
    <property type="project" value="UniProtKB"/>
</dbReference>
<dbReference type="GO" id="GO:0005730">
    <property type="term" value="C:nucleolus"/>
    <property type="evidence" value="ECO:0007669"/>
    <property type="project" value="UniProtKB-SubCell"/>
</dbReference>
<dbReference type="GO" id="GO:1990904">
    <property type="term" value="C:ribonucleoprotein complex"/>
    <property type="evidence" value="ECO:0000250"/>
    <property type="project" value="UniProtKB"/>
</dbReference>
<dbReference type="GO" id="GO:0005840">
    <property type="term" value="C:ribosome"/>
    <property type="evidence" value="ECO:0000250"/>
    <property type="project" value="UniProtKB"/>
</dbReference>
<dbReference type="GO" id="GO:0015935">
    <property type="term" value="C:small ribosomal subunit"/>
    <property type="evidence" value="ECO:0000247"/>
    <property type="project" value="MGI"/>
</dbReference>
<dbReference type="GO" id="GO:0032040">
    <property type="term" value="C:small-subunit processome"/>
    <property type="evidence" value="ECO:0000250"/>
    <property type="project" value="UniProtKB"/>
</dbReference>
<dbReference type="GO" id="GO:0045202">
    <property type="term" value="C:synapse"/>
    <property type="evidence" value="ECO:0000314"/>
    <property type="project" value="SynGO"/>
</dbReference>
<dbReference type="GO" id="GO:0019843">
    <property type="term" value="F:rRNA binding"/>
    <property type="evidence" value="ECO:0007669"/>
    <property type="project" value="UniProtKB-KW"/>
</dbReference>
<dbReference type="GO" id="GO:0003735">
    <property type="term" value="F:structural constituent of ribosome"/>
    <property type="evidence" value="ECO:0000314"/>
    <property type="project" value="UniProtKB"/>
</dbReference>
<dbReference type="GO" id="GO:0002181">
    <property type="term" value="P:cytoplasmic translation"/>
    <property type="evidence" value="ECO:0000303"/>
    <property type="project" value="ComplexPortal"/>
</dbReference>
<dbReference type="GO" id="GO:0042274">
    <property type="term" value="P:ribosomal small subunit biogenesis"/>
    <property type="evidence" value="ECO:0000250"/>
    <property type="project" value="UniProtKB"/>
</dbReference>
<dbReference type="CDD" id="cd06087">
    <property type="entry name" value="KOW_RPS4"/>
    <property type="match status" value="1"/>
</dbReference>
<dbReference type="CDD" id="cd00165">
    <property type="entry name" value="S4"/>
    <property type="match status" value="1"/>
</dbReference>
<dbReference type="FunFam" id="2.30.30.30:FF:000005">
    <property type="entry name" value="40S ribosomal protein S4"/>
    <property type="match status" value="1"/>
</dbReference>
<dbReference type="FunFam" id="2.40.50.740:FF:000001">
    <property type="entry name" value="40S ribosomal protein S4"/>
    <property type="match status" value="1"/>
</dbReference>
<dbReference type="FunFam" id="3.10.290.10:FF:000051">
    <property type="entry name" value="40S ribosomal protein S4, X isoform"/>
    <property type="match status" value="1"/>
</dbReference>
<dbReference type="Gene3D" id="2.30.30.30">
    <property type="match status" value="1"/>
</dbReference>
<dbReference type="Gene3D" id="2.40.50.740">
    <property type="match status" value="1"/>
</dbReference>
<dbReference type="Gene3D" id="3.10.290.10">
    <property type="entry name" value="RNA-binding S4 domain"/>
    <property type="match status" value="1"/>
</dbReference>
<dbReference type="HAMAP" id="MF_00485">
    <property type="entry name" value="Ribosomal_eS4"/>
    <property type="match status" value="1"/>
</dbReference>
<dbReference type="InterPro" id="IPR005824">
    <property type="entry name" value="KOW"/>
</dbReference>
<dbReference type="InterPro" id="IPR014722">
    <property type="entry name" value="Rib_uL2_dom2"/>
</dbReference>
<dbReference type="InterPro" id="IPR000876">
    <property type="entry name" value="Ribosomal_eS4"/>
</dbReference>
<dbReference type="InterPro" id="IPR032277">
    <property type="entry name" value="Ribosomal_eS4_C"/>
</dbReference>
<dbReference type="InterPro" id="IPR013845">
    <property type="entry name" value="Ribosomal_eS4_central_region"/>
</dbReference>
<dbReference type="InterPro" id="IPR038237">
    <property type="entry name" value="Ribosomal_eS4_central_sf"/>
</dbReference>
<dbReference type="InterPro" id="IPR041982">
    <property type="entry name" value="Ribosomal_eS4_KOW"/>
</dbReference>
<dbReference type="InterPro" id="IPR013843">
    <property type="entry name" value="Ribosomal_eS4_N"/>
</dbReference>
<dbReference type="InterPro" id="IPR018199">
    <property type="entry name" value="Ribosomal_eS4_N_CS"/>
</dbReference>
<dbReference type="InterPro" id="IPR002942">
    <property type="entry name" value="S4_RNA-bd"/>
</dbReference>
<dbReference type="InterPro" id="IPR036986">
    <property type="entry name" value="S4_RNA-bd_sf"/>
</dbReference>
<dbReference type="PANTHER" id="PTHR11581">
    <property type="entry name" value="30S/40S RIBOSOMAL PROTEIN S4"/>
    <property type="match status" value="1"/>
</dbReference>
<dbReference type="PANTHER" id="PTHR11581:SF0">
    <property type="entry name" value="SMALL RIBOSOMAL SUBUNIT PROTEIN ES4"/>
    <property type="match status" value="1"/>
</dbReference>
<dbReference type="Pfam" id="PF16121">
    <property type="entry name" value="40S_S4_C"/>
    <property type="match status" value="1"/>
</dbReference>
<dbReference type="Pfam" id="PF00467">
    <property type="entry name" value="KOW"/>
    <property type="match status" value="1"/>
</dbReference>
<dbReference type="Pfam" id="PF00900">
    <property type="entry name" value="Ribosomal_S4e"/>
    <property type="match status" value="1"/>
</dbReference>
<dbReference type="Pfam" id="PF08071">
    <property type="entry name" value="RS4NT"/>
    <property type="match status" value="1"/>
</dbReference>
<dbReference type="PIRSF" id="PIRSF002116">
    <property type="entry name" value="Ribosomal_S4"/>
    <property type="match status" value="1"/>
</dbReference>
<dbReference type="SMART" id="SM00363">
    <property type="entry name" value="S4"/>
    <property type="match status" value="1"/>
</dbReference>
<dbReference type="PROSITE" id="PS00528">
    <property type="entry name" value="RIBOSOMAL_S4E"/>
    <property type="match status" value="1"/>
</dbReference>
<dbReference type="PROSITE" id="PS50889">
    <property type="entry name" value="S4"/>
    <property type="match status" value="1"/>
</dbReference>
<feature type="initiator methionine" description="Removed" evidence="1">
    <location>
        <position position="1"/>
    </location>
</feature>
<feature type="chain" id="PRO_0000130809" description="Small ribosomal subunit protein eS4">
    <location>
        <begin position="2"/>
        <end position="263"/>
    </location>
</feature>
<feature type="domain" description="S4 RNA-binding">
    <location>
        <begin position="42"/>
        <end position="104"/>
    </location>
</feature>
<feature type="modified residue" description="N6-acetyllysine" evidence="6">
    <location>
        <position position="233"/>
    </location>
</feature>
<feature type="cross-link" description="Glycyl lysine isopeptide (Lys-Gly) (interchain with G-Cter in SUMO2)" evidence="1">
    <location>
        <position position="230"/>
    </location>
</feature>
<feature type="sequence conflict" description="In Ref. 2; BAB29207." evidence="3" ref="2">
    <original>L</original>
    <variation>M</variation>
    <location>
        <position position="9"/>
    </location>
</feature>
<proteinExistence type="evidence at protein level"/>
<keyword id="KW-0002">3D-structure</keyword>
<keyword id="KW-0007">Acetylation</keyword>
<keyword id="KW-0963">Cytoplasm</keyword>
<keyword id="KW-1017">Isopeptide bond</keyword>
<keyword id="KW-0539">Nucleus</keyword>
<keyword id="KW-1185">Reference proteome</keyword>
<keyword id="KW-0687">Ribonucleoprotein</keyword>
<keyword id="KW-0689">Ribosomal protein</keyword>
<keyword id="KW-0694">RNA-binding</keyword>
<keyword id="KW-0699">rRNA-binding</keyword>
<keyword id="KW-0832">Ubl conjugation</keyword>
<reference key="1">
    <citation type="journal article" date="1991" name="Genomics">
        <title>Inactivation of the Rps4 gene on the mouse X chromosome.</title>
        <authorList>
            <person name="Zinn A.R."/>
            <person name="Bressler S.L."/>
            <person name="Beer-Romero P."/>
            <person name="Adler D.A."/>
            <person name="Chapman V.M."/>
            <person name="Page D.C."/>
            <person name="Disteche C.M."/>
        </authorList>
    </citation>
    <scope>NUCLEOTIDE SEQUENCE [MRNA]</scope>
</reference>
<reference key="2">
    <citation type="journal article" date="2005" name="Science">
        <title>The transcriptional landscape of the mammalian genome.</title>
        <authorList>
            <person name="Carninci P."/>
            <person name="Kasukawa T."/>
            <person name="Katayama S."/>
            <person name="Gough J."/>
            <person name="Frith M.C."/>
            <person name="Maeda N."/>
            <person name="Oyama R."/>
            <person name="Ravasi T."/>
            <person name="Lenhard B."/>
            <person name="Wells C."/>
            <person name="Kodzius R."/>
            <person name="Shimokawa K."/>
            <person name="Bajic V.B."/>
            <person name="Brenner S.E."/>
            <person name="Batalov S."/>
            <person name="Forrest A.R."/>
            <person name="Zavolan M."/>
            <person name="Davis M.J."/>
            <person name="Wilming L.G."/>
            <person name="Aidinis V."/>
            <person name="Allen J.E."/>
            <person name="Ambesi-Impiombato A."/>
            <person name="Apweiler R."/>
            <person name="Aturaliya R.N."/>
            <person name="Bailey T.L."/>
            <person name="Bansal M."/>
            <person name="Baxter L."/>
            <person name="Beisel K.W."/>
            <person name="Bersano T."/>
            <person name="Bono H."/>
            <person name="Chalk A.M."/>
            <person name="Chiu K.P."/>
            <person name="Choudhary V."/>
            <person name="Christoffels A."/>
            <person name="Clutterbuck D.R."/>
            <person name="Crowe M.L."/>
            <person name="Dalla E."/>
            <person name="Dalrymple B.P."/>
            <person name="de Bono B."/>
            <person name="Della Gatta G."/>
            <person name="di Bernardo D."/>
            <person name="Down T."/>
            <person name="Engstrom P."/>
            <person name="Fagiolini M."/>
            <person name="Faulkner G."/>
            <person name="Fletcher C.F."/>
            <person name="Fukushima T."/>
            <person name="Furuno M."/>
            <person name="Futaki S."/>
            <person name="Gariboldi M."/>
            <person name="Georgii-Hemming P."/>
            <person name="Gingeras T.R."/>
            <person name="Gojobori T."/>
            <person name="Green R.E."/>
            <person name="Gustincich S."/>
            <person name="Harbers M."/>
            <person name="Hayashi Y."/>
            <person name="Hensch T.K."/>
            <person name="Hirokawa N."/>
            <person name="Hill D."/>
            <person name="Huminiecki L."/>
            <person name="Iacono M."/>
            <person name="Ikeo K."/>
            <person name="Iwama A."/>
            <person name="Ishikawa T."/>
            <person name="Jakt M."/>
            <person name="Kanapin A."/>
            <person name="Katoh M."/>
            <person name="Kawasawa Y."/>
            <person name="Kelso J."/>
            <person name="Kitamura H."/>
            <person name="Kitano H."/>
            <person name="Kollias G."/>
            <person name="Krishnan S.P."/>
            <person name="Kruger A."/>
            <person name="Kummerfeld S.K."/>
            <person name="Kurochkin I.V."/>
            <person name="Lareau L.F."/>
            <person name="Lazarevic D."/>
            <person name="Lipovich L."/>
            <person name="Liu J."/>
            <person name="Liuni S."/>
            <person name="McWilliam S."/>
            <person name="Madan Babu M."/>
            <person name="Madera M."/>
            <person name="Marchionni L."/>
            <person name="Matsuda H."/>
            <person name="Matsuzawa S."/>
            <person name="Miki H."/>
            <person name="Mignone F."/>
            <person name="Miyake S."/>
            <person name="Morris K."/>
            <person name="Mottagui-Tabar S."/>
            <person name="Mulder N."/>
            <person name="Nakano N."/>
            <person name="Nakauchi H."/>
            <person name="Ng P."/>
            <person name="Nilsson R."/>
            <person name="Nishiguchi S."/>
            <person name="Nishikawa S."/>
            <person name="Nori F."/>
            <person name="Ohara O."/>
            <person name="Okazaki Y."/>
            <person name="Orlando V."/>
            <person name="Pang K.C."/>
            <person name="Pavan W.J."/>
            <person name="Pavesi G."/>
            <person name="Pesole G."/>
            <person name="Petrovsky N."/>
            <person name="Piazza S."/>
            <person name="Reed J."/>
            <person name="Reid J.F."/>
            <person name="Ring B.Z."/>
            <person name="Ringwald M."/>
            <person name="Rost B."/>
            <person name="Ruan Y."/>
            <person name="Salzberg S.L."/>
            <person name="Sandelin A."/>
            <person name="Schneider C."/>
            <person name="Schoenbach C."/>
            <person name="Sekiguchi K."/>
            <person name="Semple C.A."/>
            <person name="Seno S."/>
            <person name="Sessa L."/>
            <person name="Sheng Y."/>
            <person name="Shibata Y."/>
            <person name="Shimada H."/>
            <person name="Shimada K."/>
            <person name="Silva D."/>
            <person name="Sinclair B."/>
            <person name="Sperling S."/>
            <person name="Stupka E."/>
            <person name="Sugiura K."/>
            <person name="Sultana R."/>
            <person name="Takenaka Y."/>
            <person name="Taki K."/>
            <person name="Tammoja K."/>
            <person name="Tan S.L."/>
            <person name="Tang S."/>
            <person name="Taylor M.S."/>
            <person name="Tegner J."/>
            <person name="Teichmann S.A."/>
            <person name="Ueda H.R."/>
            <person name="van Nimwegen E."/>
            <person name="Verardo R."/>
            <person name="Wei C.L."/>
            <person name="Yagi K."/>
            <person name="Yamanishi H."/>
            <person name="Zabarovsky E."/>
            <person name="Zhu S."/>
            <person name="Zimmer A."/>
            <person name="Hide W."/>
            <person name="Bult C."/>
            <person name="Grimmond S.M."/>
            <person name="Teasdale R.D."/>
            <person name="Liu E.T."/>
            <person name="Brusic V."/>
            <person name="Quackenbush J."/>
            <person name="Wahlestedt C."/>
            <person name="Mattick J.S."/>
            <person name="Hume D.A."/>
            <person name="Kai C."/>
            <person name="Sasaki D."/>
            <person name="Tomaru Y."/>
            <person name="Fukuda S."/>
            <person name="Kanamori-Katayama M."/>
            <person name="Suzuki M."/>
            <person name="Aoki J."/>
            <person name="Arakawa T."/>
            <person name="Iida J."/>
            <person name="Imamura K."/>
            <person name="Itoh M."/>
            <person name="Kato T."/>
            <person name="Kawaji H."/>
            <person name="Kawagashira N."/>
            <person name="Kawashima T."/>
            <person name="Kojima M."/>
            <person name="Kondo S."/>
            <person name="Konno H."/>
            <person name="Nakano K."/>
            <person name="Ninomiya N."/>
            <person name="Nishio T."/>
            <person name="Okada M."/>
            <person name="Plessy C."/>
            <person name="Shibata K."/>
            <person name="Shiraki T."/>
            <person name="Suzuki S."/>
            <person name="Tagami M."/>
            <person name="Waki K."/>
            <person name="Watahiki A."/>
            <person name="Okamura-Oho Y."/>
            <person name="Suzuki H."/>
            <person name="Kawai J."/>
            <person name="Hayashizaki Y."/>
        </authorList>
    </citation>
    <scope>NUCLEOTIDE SEQUENCE [LARGE SCALE MRNA]</scope>
    <source>
        <strain>C57BL/6J</strain>
        <tissue>Head</tissue>
    </source>
</reference>
<reference key="3">
    <citation type="journal article" date="2004" name="Genome Res.">
        <title>The status, quality, and expansion of the NIH full-length cDNA project: the Mammalian Gene Collection (MGC).</title>
        <authorList>
            <consortium name="The MGC Project Team"/>
        </authorList>
    </citation>
    <scope>NUCLEOTIDE SEQUENCE [LARGE SCALE MRNA]</scope>
    <source>
        <strain>C57BL/6J</strain>
        <tissue>Mammary gland</tissue>
    </source>
</reference>
<reference key="4">
    <citation type="journal article" date="1992" name="Genomics">
        <title>Rps4 maps near the inactivation center on the mouse X chromosome.</title>
        <authorList>
            <person name="Hamvas R.M."/>
            <person name="Zinn A.R."/>
            <person name="Keer J.T."/>
            <person name="Fisher E.M."/>
            <person name="Beer-Romero P."/>
            <person name="Brown S.D."/>
            <person name="Page D.C."/>
        </authorList>
    </citation>
    <scope>NUCLEOTIDE SEQUENCE [GENOMIC DNA] OF 219-237</scope>
</reference>
<reference key="5">
    <citation type="journal article" date="2010" name="Cell">
        <title>A tissue-specific atlas of mouse protein phosphorylation and expression.</title>
        <authorList>
            <person name="Huttlin E.L."/>
            <person name="Jedrychowski M.P."/>
            <person name="Elias J.E."/>
            <person name="Goswami T."/>
            <person name="Rad R."/>
            <person name="Beausoleil S.A."/>
            <person name="Villen J."/>
            <person name="Haas W."/>
            <person name="Sowa M.E."/>
            <person name="Gygi S.P."/>
        </authorList>
    </citation>
    <scope>IDENTIFICATION BY MASS SPECTROMETRY [LARGE SCALE ANALYSIS]</scope>
    <source>
        <tissue>Brain</tissue>
        <tissue>Brown adipose tissue</tissue>
        <tissue>Heart</tissue>
        <tissue>Kidney</tissue>
        <tissue>Liver</tissue>
        <tissue>Lung</tissue>
        <tissue>Pancreas</tissue>
        <tissue>Spleen</tissue>
        <tissue>Testis</tissue>
    </source>
</reference>
<reference key="6">
    <citation type="journal article" date="2013" name="Mol. Cell">
        <title>SIRT5-mediated lysine desuccinylation impacts diverse metabolic pathways.</title>
        <authorList>
            <person name="Park J."/>
            <person name="Chen Y."/>
            <person name="Tishkoff D.X."/>
            <person name="Peng C."/>
            <person name="Tan M."/>
            <person name="Dai L."/>
            <person name="Xie Z."/>
            <person name="Zhang Y."/>
            <person name="Zwaans B.M."/>
            <person name="Skinner M.E."/>
            <person name="Lombard D.B."/>
            <person name="Zhao Y."/>
        </authorList>
    </citation>
    <scope>ACETYLATION [LARGE SCALE ANALYSIS] AT LYS-233</scope>
    <scope>IDENTIFICATION BY MASS SPECTROMETRY [LARGE SCALE ANALYSIS]</scope>
    <source>
        <tissue>Embryonic fibroblast</tissue>
    </source>
</reference>
<reference evidence="4 5" key="7">
    <citation type="journal article" date="2022" name="Nature">
        <title>A male germ-cell-specific ribosome controls male fertility.</title>
        <authorList>
            <person name="Li H."/>
            <person name="Huo Y."/>
            <person name="He X."/>
            <person name="Yao L."/>
            <person name="Zhang H."/>
            <person name="Cui Y."/>
            <person name="Xiao H."/>
            <person name="Xie W."/>
            <person name="Zhang D."/>
            <person name="Wang Y."/>
            <person name="Zhang S."/>
            <person name="Tu H."/>
            <person name="Cheng Y."/>
            <person name="Guo Y."/>
            <person name="Cao X."/>
            <person name="Zhu Y."/>
            <person name="Jiang T."/>
            <person name="Guo X."/>
            <person name="Qin Y."/>
            <person name="Sha J."/>
        </authorList>
    </citation>
    <scope>STRUCTURE BY ELECTRON MICROSCOPY (3.03 ANGSTROMS) OF RIBOSOME</scope>
    <scope>FUNCTION</scope>
    <scope>SUBUNIT</scope>
    <scope>SUBCELLULAR LOCATION</scope>
</reference>
<evidence type="ECO:0000250" key="1">
    <source>
        <dbReference type="UniProtKB" id="P62701"/>
    </source>
</evidence>
<evidence type="ECO:0000269" key="2">
    <source>
    </source>
</evidence>
<evidence type="ECO:0000305" key="3"/>
<evidence type="ECO:0007744" key="4">
    <source>
        <dbReference type="PDB" id="7CPU"/>
    </source>
</evidence>
<evidence type="ECO:0007744" key="5">
    <source>
        <dbReference type="PDB" id="7CPV"/>
    </source>
</evidence>
<evidence type="ECO:0007744" key="6">
    <source>
    </source>
</evidence>
<name>RS4X_MOUSE</name>